<comment type="function">
    <text evidence="1 2">Substrate-recognition component of the SCF(FBXO31) protein ligase complex, which specifically mediates the ubiquitination of proteins amidated at their C-terminus in response to oxidative stress, leading to their degradation by the proteasome. Fbxo31 specifically recognizes and binds C-terminal peptides bearing an amide: C-terminal amidation in response to oxidative stress takes place following protein fragmentation. The SCF(FBXO31) also plays a role in G1 arrest following DNA damage by mediating ubiquitination of phosphorylated cyclin-D1 (ccnd1), promoting its degradation by the proteasome, resulting in G1 arrest (By similarity). The SCF(FBXO31) complex is however not a major regulator of ccnd1 stability during the G1/S transition (By similarity).</text>
</comment>
<comment type="pathway">
    <text evidence="2">Protein modification; protein ubiquitination.</text>
</comment>
<comment type="subunit">
    <text evidence="2">Part of a SCF (SKP1-cullin-F-box) protein ligase complex SCF(FBXO31).</text>
</comment>
<comment type="subcellular location">
    <subcellularLocation>
        <location evidence="2">Cytoplasm</location>
    </subcellularLocation>
</comment>
<comment type="domain">
    <text evidence="2">Zinc-binding is required for the structure of the protein and facilitate folding.</text>
</comment>
<comment type="similarity">
    <text evidence="5">Belongs to the FBXO31 family.</text>
</comment>
<proteinExistence type="evidence at transcript level"/>
<protein>
    <recommendedName>
        <fullName>F-box only protein 31</fullName>
    </recommendedName>
</protein>
<gene>
    <name type="primary">fbxo31</name>
</gene>
<dbReference type="EMBL" id="BC121976">
    <property type="protein sequence ID" value="AAI21977.1"/>
    <property type="molecule type" value="mRNA"/>
</dbReference>
<dbReference type="RefSeq" id="NP_001072525.1">
    <property type="nucleotide sequence ID" value="NM_001079057.1"/>
</dbReference>
<dbReference type="SMR" id="Q0D2D2"/>
<dbReference type="FunCoup" id="Q0D2D2">
    <property type="interactions" value="248"/>
</dbReference>
<dbReference type="STRING" id="8364.ENSXETP00000045366"/>
<dbReference type="PaxDb" id="8364-ENSXETP00000037873"/>
<dbReference type="DNASU" id="779980"/>
<dbReference type="GeneID" id="779980"/>
<dbReference type="KEGG" id="xtr:779980"/>
<dbReference type="AGR" id="Xenbase:XB-GENE-953635"/>
<dbReference type="CTD" id="79791"/>
<dbReference type="Xenbase" id="XB-GENE-953635">
    <property type="gene designation" value="fbxo31"/>
</dbReference>
<dbReference type="eggNOG" id="ENOG502QR2A">
    <property type="taxonomic scope" value="Eukaryota"/>
</dbReference>
<dbReference type="HOGENOM" id="CLU_035961_0_0_1"/>
<dbReference type="InParanoid" id="Q0D2D2"/>
<dbReference type="OMA" id="CCKPEKH"/>
<dbReference type="OrthoDB" id="722566at2759"/>
<dbReference type="PhylomeDB" id="Q0D2D2"/>
<dbReference type="TreeFam" id="TF331818"/>
<dbReference type="Reactome" id="R-XTR-8951664">
    <property type="pathway name" value="Neddylation"/>
</dbReference>
<dbReference type="Reactome" id="R-XTR-983168">
    <property type="pathway name" value="Antigen processing: Ubiquitination &amp; Proteasome degradation"/>
</dbReference>
<dbReference type="UniPathway" id="UPA00143"/>
<dbReference type="Proteomes" id="UP000008143">
    <property type="component" value="Chromosome 4"/>
</dbReference>
<dbReference type="Bgee" id="ENSXETG00000017407">
    <property type="expression patterns" value="Expressed in skeletal muscle tissue and 12 other cell types or tissues"/>
</dbReference>
<dbReference type="GO" id="GO:0005737">
    <property type="term" value="C:cytoplasm"/>
    <property type="evidence" value="ECO:0000250"/>
    <property type="project" value="UniProtKB"/>
</dbReference>
<dbReference type="GO" id="GO:0019005">
    <property type="term" value="C:SCF ubiquitin ligase complex"/>
    <property type="evidence" value="ECO:0000250"/>
    <property type="project" value="UniProtKB"/>
</dbReference>
<dbReference type="GO" id="GO:1990756">
    <property type="term" value="F:ubiquitin-like ligase-substrate adaptor activity"/>
    <property type="evidence" value="ECO:0000250"/>
    <property type="project" value="UniProtKB"/>
</dbReference>
<dbReference type="GO" id="GO:0031145">
    <property type="term" value="P:anaphase-promoting complex-dependent catabolic process"/>
    <property type="evidence" value="ECO:0000250"/>
    <property type="project" value="UniProtKB"/>
</dbReference>
<dbReference type="GO" id="GO:0034599">
    <property type="term" value="P:cellular response to oxidative stress"/>
    <property type="evidence" value="ECO:0000250"/>
    <property type="project" value="UniProtKB"/>
</dbReference>
<dbReference type="GO" id="GO:0006974">
    <property type="term" value="P:DNA damage response"/>
    <property type="evidence" value="ECO:0000250"/>
    <property type="project" value="UniProtKB"/>
</dbReference>
<dbReference type="GO" id="GO:0031571">
    <property type="term" value="P:mitotic G1 DNA damage checkpoint signaling"/>
    <property type="evidence" value="ECO:0000250"/>
    <property type="project" value="UniProtKB"/>
</dbReference>
<dbReference type="GO" id="GO:0043161">
    <property type="term" value="P:proteasome-mediated ubiquitin-dependent protein catabolic process"/>
    <property type="evidence" value="ECO:0000250"/>
    <property type="project" value="UniProtKB"/>
</dbReference>
<dbReference type="GO" id="GO:0016567">
    <property type="term" value="P:protein ubiquitination"/>
    <property type="evidence" value="ECO:0007669"/>
    <property type="project" value="UniProtKB-UniPathway"/>
</dbReference>
<dbReference type="GO" id="GO:0031146">
    <property type="term" value="P:SCF-dependent proteasomal ubiquitin-dependent protein catabolic process"/>
    <property type="evidence" value="ECO:0000250"/>
    <property type="project" value="UniProtKB"/>
</dbReference>
<dbReference type="CDD" id="cd22102">
    <property type="entry name" value="F-box_FBXO31"/>
    <property type="match status" value="1"/>
</dbReference>
<dbReference type="Gene3D" id="1.20.1280.50">
    <property type="match status" value="1"/>
</dbReference>
<dbReference type="InterPro" id="IPR036047">
    <property type="entry name" value="F-box-like_dom_sf"/>
</dbReference>
<dbReference type="InterPro" id="IPR001810">
    <property type="entry name" value="F-box_dom"/>
</dbReference>
<dbReference type="InterPro" id="IPR045048">
    <property type="entry name" value="FBXO31/39"/>
</dbReference>
<dbReference type="PANTHER" id="PTHR10706">
    <property type="entry name" value="F-BOX FAMILY PROTEIN"/>
    <property type="match status" value="1"/>
</dbReference>
<dbReference type="PANTHER" id="PTHR10706:SF130">
    <property type="entry name" value="F-BOX ONLY PROTEIN 31"/>
    <property type="match status" value="1"/>
</dbReference>
<dbReference type="Pfam" id="PF12014">
    <property type="entry name" value="Cyclin_D1_bind"/>
    <property type="match status" value="1"/>
</dbReference>
<dbReference type="Pfam" id="PF12937">
    <property type="entry name" value="F-box-like"/>
    <property type="match status" value="1"/>
</dbReference>
<dbReference type="SMART" id="SM00256">
    <property type="entry name" value="FBOX"/>
    <property type="match status" value="1"/>
</dbReference>
<dbReference type="SUPFAM" id="SSF81383">
    <property type="entry name" value="F-box domain"/>
    <property type="match status" value="1"/>
</dbReference>
<dbReference type="PROSITE" id="PS50181">
    <property type="entry name" value="FBOX"/>
    <property type="match status" value="1"/>
</dbReference>
<keyword id="KW-0131">Cell cycle</keyword>
<keyword id="KW-0963">Cytoplasm</keyword>
<keyword id="KW-0227">DNA damage</keyword>
<keyword id="KW-0479">Metal-binding</keyword>
<keyword id="KW-1185">Reference proteome</keyword>
<keyword id="KW-0833">Ubl conjugation pathway</keyword>
<keyword id="KW-0862">Zinc</keyword>
<reference key="1">
    <citation type="submission" date="2006-08" db="EMBL/GenBank/DDBJ databases">
        <authorList>
            <consortium name="NIH - Xenopus Gene Collection (XGC) project"/>
        </authorList>
    </citation>
    <scope>NUCLEOTIDE SEQUENCE [LARGE SCALE MRNA]</scope>
    <source>
        <tissue>Brain</tissue>
    </source>
</reference>
<evidence type="ECO:0000250" key="1">
    <source>
        <dbReference type="UniProtKB" id="Q3TQF0"/>
    </source>
</evidence>
<evidence type="ECO:0000250" key="2">
    <source>
        <dbReference type="UniProtKB" id="Q5XUX0"/>
    </source>
</evidence>
<evidence type="ECO:0000255" key="3">
    <source>
        <dbReference type="PROSITE-ProRule" id="PRU00080"/>
    </source>
</evidence>
<evidence type="ECO:0000256" key="4">
    <source>
        <dbReference type="SAM" id="MobiDB-lite"/>
    </source>
</evidence>
<evidence type="ECO:0000305" key="5"/>
<name>FBX31_XENTR</name>
<organism>
    <name type="scientific">Xenopus tropicalis</name>
    <name type="common">Western clawed frog</name>
    <name type="synonym">Silurana tropicalis</name>
    <dbReference type="NCBI Taxonomy" id="8364"/>
    <lineage>
        <taxon>Eukaryota</taxon>
        <taxon>Metazoa</taxon>
        <taxon>Chordata</taxon>
        <taxon>Craniata</taxon>
        <taxon>Vertebrata</taxon>
        <taxon>Euteleostomi</taxon>
        <taxon>Amphibia</taxon>
        <taxon>Batrachia</taxon>
        <taxon>Anura</taxon>
        <taxon>Pipoidea</taxon>
        <taxon>Pipidae</taxon>
        <taxon>Xenopodinae</taxon>
        <taxon>Xenopus</taxon>
        <taxon>Silurana</taxon>
    </lineage>
</organism>
<sequence length="551" mass="63238">MAVCARLCGVGQSGGCRRRQQRKGAGNGPELEDEEEEDEVRIEAEVIGGQAAEAPRRPRSLLHLPPEILVEIFSSLPGTELPSLAQVCRKFRQILTTDTIWKRRCKQEYGVCENLRKLEVTGVSCRDVYVKRINPRVKSGRFMKILPDYEHMEYRDIYTCLLHQYRHILGLWQPDIGPYGGLLNVVVDGLFIIGWMYLPPHDPHVDEAMRLKPVFRIHLMERNDATVECMYGHKGPHNGQIQIVKKDEFSTKCIQTDYHRMSGGRQEEFRTWLREDLGRTLEDIFHEHMQELILMKFIYICQYDNCLTYRRIYHPPSRPDDLLNPGFFKGTYGSHGLEIVMLSFHGTIAKVTKITGDPNVPAGQQTLEVDLTRPVQLPDVEHLRNFDEMSRLILDVQAQIHREQRQTGNEEDDGRGAGPDKAEHSQQPAPVLRPANEDANKVDGGDGEEQKPPNVQSFVLPTGVMARNEEYPRSCKMCFYGTGLIAGHGFSSPERTPGLFILFDEDRFGFIWLELKSFSLYSRMRDRFQQSEAPSVEAFEEMLQNMQSWTT</sequence>
<feature type="chain" id="PRO_0000378166" description="F-box only protein 31">
    <location>
        <begin position="1"/>
        <end position="551"/>
    </location>
</feature>
<feature type="domain" description="F-box" evidence="3">
    <location>
        <begin position="58"/>
        <end position="104"/>
    </location>
</feature>
<feature type="region of interest" description="Disordered" evidence="4">
    <location>
        <begin position="12"/>
        <end position="38"/>
    </location>
</feature>
<feature type="region of interest" description="Disordered" evidence="4">
    <location>
        <begin position="402"/>
        <end position="459"/>
    </location>
</feature>
<feature type="compositionally biased region" description="Basic and acidic residues" evidence="4">
    <location>
        <begin position="414"/>
        <end position="424"/>
    </location>
</feature>
<feature type="compositionally biased region" description="Basic and acidic residues" evidence="4">
    <location>
        <begin position="435"/>
        <end position="451"/>
    </location>
</feature>
<feature type="binding site" evidence="2">
    <location>
        <position position="229"/>
    </location>
    <ligand>
        <name>Zn(2+)</name>
        <dbReference type="ChEBI" id="CHEBI:29105"/>
    </ligand>
</feature>
<feature type="binding site" evidence="2">
    <location>
        <position position="237"/>
    </location>
    <ligand>
        <name>Zn(2+)</name>
        <dbReference type="ChEBI" id="CHEBI:29105"/>
    </ligand>
</feature>
<feature type="binding site" evidence="2">
    <location>
        <position position="253"/>
    </location>
    <ligand>
        <name>Zn(2+)</name>
        <dbReference type="ChEBI" id="CHEBI:29105"/>
    </ligand>
</feature>
<feature type="binding site" evidence="2">
    <location>
        <position position="259"/>
    </location>
    <ligand>
        <name>Zn(2+)</name>
        <dbReference type="ChEBI" id="CHEBI:29105"/>
    </ligand>
</feature>
<accession>Q0D2D2</accession>